<evidence type="ECO:0000255" key="1">
    <source>
        <dbReference type="HAMAP-Rule" id="MF_00040"/>
    </source>
</evidence>
<name>RRF_CAMC1</name>
<reference key="1">
    <citation type="submission" date="2007-10" db="EMBL/GenBank/DDBJ databases">
        <title>Genome sequence of Campylobacter concisus 13826 isolated from human feces.</title>
        <authorList>
            <person name="Fouts D.E."/>
            <person name="Mongodin E.F."/>
            <person name="Puiu D."/>
            <person name="Sebastian Y."/>
            <person name="Miller W.G."/>
            <person name="Mandrell R.E."/>
            <person name="On S."/>
            <person name="Nelson K.E."/>
        </authorList>
    </citation>
    <scope>NUCLEOTIDE SEQUENCE [LARGE SCALE GENOMIC DNA]</scope>
    <source>
        <strain>13826</strain>
    </source>
</reference>
<protein>
    <recommendedName>
        <fullName evidence="1">Ribosome-recycling factor</fullName>
        <shortName evidence="1">RRF</shortName>
    </recommendedName>
    <alternativeName>
        <fullName evidence="1">Ribosome-releasing factor</fullName>
    </alternativeName>
</protein>
<organism>
    <name type="scientific">Campylobacter concisus (strain 13826)</name>
    <dbReference type="NCBI Taxonomy" id="360104"/>
    <lineage>
        <taxon>Bacteria</taxon>
        <taxon>Pseudomonadati</taxon>
        <taxon>Campylobacterota</taxon>
        <taxon>Epsilonproteobacteria</taxon>
        <taxon>Campylobacterales</taxon>
        <taxon>Campylobacteraceae</taxon>
        <taxon>Campylobacter</taxon>
    </lineage>
</organism>
<sequence length="185" mass="20532">MLNKIYDTQKEGCEKAIASLKRDFTTLRTGKVNINILDNVMVDYYGSPTPLNQVATVLTSDASTIAITPWEKSMIKAISSAIQAANIGVNPNSDGESVKLFFPPMTVEQRQENAKHAKAMGEKAKVSIRNVRKDANDEVKKLEKDKAITEDESKKGQDEVQKITDTYTAKIDTLVKEKEAELLKI</sequence>
<accession>A7ZG18</accession>
<dbReference type="EMBL" id="CP000792">
    <property type="protein sequence ID" value="EAT97691.1"/>
    <property type="molecule type" value="Genomic_DNA"/>
</dbReference>
<dbReference type="RefSeq" id="WP_002941557.1">
    <property type="nucleotide sequence ID" value="NC_009802.2"/>
</dbReference>
<dbReference type="SMR" id="A7ZG18"/>
<dbReference type="STRING" id="360104.CCC13826_0341"/>
<dbReference type="KEGG" id="cco:CCC13826_0341"/>
<dbReference type="eggNOG" id="COG0233">
    <property type="taxonomic scope" value="Bacteria"/>
</dbReference>
<dbReference type="HOGENOM" id="CLU_073981_2_0_7"/>
<dbReference type="OrthoDB" id="9804006at2"/>
<dbReference type="Proteomes" id="UP000001121">
    <property type="component" value="Chromosome"/>
</dbReference>
<dbReference type="GO" id="GO:0005829">
    <property type="term" value="C:cytosol"/>
    <property type="evidence" value="ECO:0007669"/>
    <property type="project" value="GOC"/>
</dbReference>
<dbReference type="GO" id="GO:0043023">
    <property type="term" value="F:ribosomal large subunit binding"/>
    <property type="evidence" value="ECO:0007669"/>
    <property type="project" value="TreeGrafter"/>
</dbReference>
<dbReference type="GO" id="GO:0002184">
    <property type="term" value="P:cytoplasmic translational termination"/>
    <property type="evidence" value="ECO:0007669"/>
    <property type="project" value="TreeGrafter"/>
</dbReference>
<dbReference type="CDD" id="cd00520">
    <property type="entry name" value="RRF"/>
    <property type="match status" value="1"/>
</dbReference>
<dbReference type="FunFam" id="1.10.132.20:FF:000001">
    <property type="entry name" value="Ribosome-recycling factor"/>
    <property type="match status" value="1"/>
</dbReference>
<dbReference type="FunFam" id="3.30.1360.40:FF:000001">
    <property type="entry name" value="Ribosome-recycling factor"/>
    <property type="match status" value="1"/>
</dbReference>
<dbReference type="Gene3D" id="3.30.1360.40">
    <property type="match status" value="1"/>
</dbReference>
<dbReference type="Gene3D" id="1.10.132.20">
    <property type="entry name" value="Ribosome-recycling factor"/>
    <property type="match status" value="1"/>
</dbReference>
<dbReference type="HAMAP" id="MF_00040">
    <property type="entry name" value="RRF"/>
    <property type="match status" value="1"/>
</dbReference>
<dbReference type="InterPro" id="IPR002661">
    <property type="entry name" value="Ribosome_recyc_fac"/>
</dbReference>
<dbReference type="InterPro" id="IPR023584">
    <property type="entry name" value="Ribosome_recyc_fac_dom"/>
</dbReference>
<dbReference type="InterPro" id="IPR036191">
    <property type="entry name" value="RRF_sf"/>
</dbReference>
<dbReference type="NCBIfam" id="TIGR00496">
    <property type="entry name" value="frr"/>
    <property type="match status" value="1"/>
</dbReference>
<dbReference type="PANTHER" id="PTHR20982:SF3">
    <property type="entry name" value="MITOCHONDRIAL RIBOSOME RECYCLING FACTOR PSEUDO 1"/>
    <property type="match status" value="1"/>
</dbReference>
<dbReference type="PANTHER" id="PTHR20982">
    <property type="entry name" value="RIBOSOME RECYCLING FACTOR"/>
    <property type="match status" value="1"/>
</dbReference>
<dbReference type="Pfam" id="PF01765">
    <property type="entry name" value="RRF"/>
    <property type="match status" value="1"/>
</dbReference>
<dbReference type="SUPFAM" id="SSF55194">
    <property type="entry name" value="Ribosome recycling factor, RRF"/>
    <property type="match status" value="1"/>
</dbReference>
<proteinExistence type="inferred from homology"/>
<keyword id="KW-0963">Cytoplasm</keyword>
<keyword id="KW-0648">Protein biosynthesis</keyword>
<feature type="chain" id="PRO_1000003128" description="Ribosome-recycling factor">
    <location>
        <begin position="1"/>
        <end position="185"/>
    </location>
</feature>
<comment type="function">
    <text evidence="1">Responsible for the release of ribosomes from messenger RNA at the termination of protein biosynthesis. May increase the efficiency of translation by recycling ribosomes from one round of translation to another.</text>
</comment>
<comment type="subcellular location">
    <subcellularLocation>
        <location evidence="1">Cytoplasm</location>
    </subcellularLocation>
</comment>
<comment type="similarity">
    <text evidence="1">Belongs to the RRF family.</text>
</comment>
<gene>
    <name evidence="1" type="primary">frr</name>
    <name type="ordered locus">Ccon26_18910</name>
    <name type="ORF">CCC13826_0341</name>
</gene>